<name>FOLD_METFK</name>
<feature type="chain" id="PRO_0000268396" description="Bifunctional protein FolD">
    <location>
        <begin position="1"/>
        <end position="289"/>
    </location>
</feature>
<feature type="binding site" evidence="1">
    <location>
        <begin position="166"/>
        <end position="168"/>
    </location>
    <ligand>
        <name>NADP(+)</name>
        <dbReference type="ChEBI" id="CHEBI:58349"/>
    </ligand>
</feature>
<feature type="binding site" evidence="1">
    <location>
        <position position="232"/>
    </location>
    <ligand>
        <name>NADP(+)</name>
        <dbReference type="ChEBI" id="CHEBI:58349"/>
    </ligand>
</feature>
<evidence type="ECO:0000255" key="1">
    <source>
        <dbReference type="HAMAP-Rule" id="MF_01576"/>
    </source>
</evidence>
<accession>Q1GXE6</accession>
<comment type="function">
    <text evidence="1">Catalyzes the oxidation of 5,10-methylenetetrahydrofolate to 5,10-methenyltetrahydrofolate and then the hydrolysis of 5,10-methenyltetrahydrofolate to 10-formyltetrahydrofolate.</text>
</comment>
<comment type="catalytic activity">
    <reaction evidence="1">
        <text>(6R)-5,10-methylene-5,6,7,8-tetrahydrofolate + NADP(+) = (6R)-5,10-methenyltetrahydrofolate + NADPH</text>
        <dbReference type="Rhea" id="RHEA:22812"/>
        <dbReference type="ChEBI" id="CHEBI:15636"/>
        <dbReference type="ChEBI" id="CHEBI:57455"/>
        <dbReference type="ChEBI" id="CHEBI:57783"/>
        <dbReference type="ChEBI" id="CHEBI:58349"/>
        <dbReference type="EC" id="1.5.1.5"/>
    </reaction>
</comment>
<comment type="catalytic activity">
    <reaction evidence="1">
        <text>(6R)-5,10-methenyltetrahydrofolate + H2O = (6R)-10-formyltetrahydrofolate + H(+)</text>
        <dbReference type="Rhea" id="RHEA:23700"/>
        <dbReference type="ChEBI" id="CHEBI:15377"/>
        <dbReference type="ChEBI" id="CHEBI:15378"/>
        <dbReference type="ChEBI" id="CHEBI:57455"/>
        <dbReference type="ChEBI" id="CHEBI:195366"/>
        <dbReference type="EC" id="3.5.4.9"/>
    </reaction>
</comment>
<comment type="pathway">
    <text evidence="1">One-carbon metabolism; tetrahydrofolate interconversion.</text>
</comment>
<comment type="subunit">
    <text evidence="1">Homodimer.</text>
</comment>
<comment type="similarity">
    <text evidence="1">Belongs to the tetrahydrofolate dehydrogenase/cyclohydrolase family.</text>
</comment>
<keyword id="KW-0028">Amino-acid biosynthesis</keyword>
<keyword id="KW-0368">Histidine biosynthesis</keyword>
<keyword id="KW-0378">Hydrolase</keyword>
<keyword id="KW-0486">Methionine biosynthesis</keyword>
<keyword id="KW-0511">Multifunctional enzyme</keyword>
<keyword id="KW-0521">NADP</keyword>
<keyword id="KW-0554">One-carbon metabolism</keyword>
<keyword id="KW-0560">Oxidoreductase</keyword>
<keyword id="KW-0658">Purine biosynthesis</keyword>
<keyword id="KW-1185">Reference proteome</keyword>
<dbReference type="EC" id="1.5.1.5" evidence="1"/>
<dbReference type="EC" id="3.5.4.9" evidence="1"/>
<dbReference type="EMBL" id="CP000284">
    <property type="protein sequence ID" value="ABE48344.1"/>
    <property type="molecule type" value="Genomic_DNA"/>
</dbReference>
<dbReference type="RefSeq" id="WP_011478441.1">
    <property type="nucleotide sequence ID" value="NC_007947.1"/>
</dbReference>
<dbReference type="SMR" id="Q1GXE6"/>
<dbReference type="STRING" id="265072.Mfla_0073"/>
<dbReference type="KEGG" id="mfa:Mfla_0073"/>
<dbReference type="eggNOG" id="COG0190">
    <property type="taxonomic scope" value="Bacteria"/>
</dbReference>
<dbReference type="HOGENOM" id="CLU_034045_2_1_4"/>
<dbReference type="OrthoDB" id="9803580at2"/>
<dbReference type="UniPathway" id="UPA00193"/>
<dbReference type="Proteomes" id="UP000002440">
    <property type="component" value="Chromosome"/>
</dbReference>
<dbReference type="GO" id="GO:0005829">
    <property type="term" value="C:cytosol"/>
    <property type="evidence" value="ECO:0007669"/>
    <property type="project" value="TreeGrafter"/>
</dbReference>
<dbReference type="GO" id="GO:0004477">
    <property type="term" value="F:methenyltetrahydrofolate cyclohydrolase activity"/>
    <property type="evidence" value="ECO:0007669"/>
    <property type="project" value="UniProtKB-UniRule"/>
</dbReference>
<dbReference type="GO" id="GO:0004488">
    <property type="term" value="F:methylenetetrahydrofolate dehydrogenase (NADP+) activity"/>
    <property type="evidence" value="ECO:0007669"/>
    <property type="project" value="UniProtKB-UniRule"/>
</dbReference>
<dbReference type="GO" id="GO:0000105">
    <property type="term" value="P:L-histidine biosynthetic process"/>
    <property type="evidence" value="ECO:0007669"/>
    <property type="project" value="UniProtKB-KW"/>
</dbReference>
<dbReference type="GO" id="GO:0009086">
    <property type="term" value="P:methionine biosynthetic process"/>
    <property type="evidence" value="ECO:0007669"/>
    <property type="project" value="UniProtKB-KW"/>
</dbReference>
<dbReference type="GO" id="GO:0006164">
    <property type="term" value="P:purine nucleotide biosynthetic process"/>
    <property type="evidence" value="ECO:0007669"/>
    <property type="project" value="UniProtKB-KW"/>
</dbReference>
<dbReference type="GO" id="GO:0035999">
    <property type="term" value="P:tetrahydrofolate interconversion"/>
    <property type="evidence" value="ECO:0007669"/>
    <property type="project" value="UniProtKB-UniRule"/>
</dbReference>
<dbReference type="CDD" id="cd01080">
    <property type="entry name" value="NAD_bind_m-THF_DH_Cyclohyd"/>
    <property type="match status" value="1"/>
</dbReference>
<dbReference type="FunFam" id="3.40.50.720:FF:000006">
    <property type="entry name" value="Bifunctional protein FolD"/>
    <property type="match status" value="1"/>
</dbReference>
<dbReference type="FunFam" id="3.40.50.10860:FF:000005">
    <property type="entry name" value="C-1-tetrahydrofolate synthase, cytoplasmic, putative"/>
    <property type="match status" value="1"/>
</dbReference>
<dbReference type="Gene3D" id="3.40.50.10860">
    <property type="entry name" value="Leucine Dehydrogenase, chain A, domain 1"/>
    <property type="match status" value="1"/>
</dbReference>
<dbReference type="Gene3D" id="3.40.50.720">
    <property type="entry name" value="NAD(P)-binding Rossmann-like Domain"/>
    <property type="match status" value="1"/>
</dbReference>
<dbReference type="HAMAP" id="MF_01576">
    <property type="entry name" value="THF_DHG_CYH"/>
    <property type="match status" value="1"/>
</dbReference>
<dbReference type="InterPro" id="IPR046346">
    <property type="entry name" value="Aminoacid_DH-like_N_sf"/>
</dbReference>
<dbReference type="InterPro" id="IPR036291">
    <property type="entry name" value="NAD(P)-bd_dom_sf"/>
</dbReference>
<dbReference type="InterPro" id="IPR000672">
    <property type="entry name" value="THF_DH/CycHdrlase"/>
</dbReference>
<dbReference type="InterPro" id="IPR020630">
    <property type="entry name" value="THF_DH/CycHdrlase_cat_dom"/>
</dbReference>
<dbReference type="InterPro" id="IPR020867">
    <property type="entry name" value="THF_DH/CycHdrlase_CS"/>
</dbReference>
<dbReference type="InterPro" id="IPR020631">
    <property type="entry name" value="THF_DH/CycHdrlase_NAD-bd_dom"/>
</dbReference>
<dbReference type="NCBIfam" id="NF008058">
    <property type="entry name" value="PRK10792.1"/>
    <property type="match status" value="1"/>
</dbReference>
<dbReference type="PANTHER" id="PTHR48099:SF5">
    <property type="entry name" value="C-1-TETRAHYDROFOLATE SYNTHASE, CYTOPLASMIC"/>
    <property type="match status" value="1"/>
</dbReference>
<dbReference type="PANTHER" id="PTHR48099">
    <property type="entry name" value="C-1-TETRAHYDROFOLATE SYNTHASE, CYTOPLASMIC-RELATED"/>
    <property type="match status" value="1"/>
</dbReference>
<dbReference type="Pfam" id="PF00763">
    <property type="entry name" value="THF_DHG_CYH"/>
    <property type="match status" value="1"/>
</dbReference>
<dbReference type="Pfam" id="PF02882">
    <property type="entry name" value="THF_DHG_CYH_C"/>
    <property type="match status" value="1"/>
</dbReference>
<dbReference type="PRINTS" id="PR00085">
    <property type="entry name" value="THFDHDRGNASE"/>
</dbReference>
<dbReference type="SUPFAM" id="SSF53223">
    <property type="entry name" value="Aminoacid dehydrogenase-like, N-terminal domain"/>
    <property type="match status" value="1"/>
</dbReference>
<dbReference type="SUPFAM" id="SSF51735">
    <property type="entry name" value="NAD(P)-binding Rossmann-fold domains"/>
    <property type="match status" value="1"/>
</dbReference>
<dbReference type="PROSITE" id="PS00767">
    <property type="entry name" value="THF_DHG_CYH_2"/>
    <property type="match status" value="1"/>
</dbReference>
<reference key="1">
    <citation type="submission" date="2006-03" db="EMBL/GenBank/DDBJ databases">
        <title>Complete sequence of Methylobacillus flagellatus KT.</title>
        <authorList>
            <consortium name="US DOE Joint Genome Institute"/>
            <person name="Copeland A."/>
            <person name="Lucas S."/>
            <person name="Lapidus A."/>
            <person name="Barry K."/>
            <person name="Detter J.C."/>
            <person name="Glavina del Rio T."/>
            <person name="Hammon N."/>
            <person name="Israni S."/>
            <person name="Dalin E."/>
            <person name="Tice H."/>
            <person name="Pitluck S."/>
            <person name="Brettin T."/>
            <person name="Bruce D."/>
            <person name="Han C."/>
            <person name="Tapia R."/>
            <person name="Saunders E."/>
            <person name="Gilna P."/>
            <person name="Schmutz J."/>
            <person name="Larimer F."/>
            <person name="Land M."/>
            <person name="Kyrpides N."/>
            <person name="Anderson I."/>
            <person name="Richardson P."/>
        </authorList>
    </citation>
    <scope>NUCLEOTIDE SEQUENCE [LARGE SCALE GENOMIC DNA]</scope>
    <source>
        <strain>ATCC 51484 / DSM 6875 / VKM B-1610 / KT</strain>
    </source>
</reference>
<organism>
    <name type="scientific">Methylobacillus flagellatus (strain ATCC 51484 / DSM 6875 / VKM B-1610 / KT)</name>
    <dbReference type="NCBI Taxonomy" id="265072"/>
    <lineage>
        <taxon>Bacteria</taxon>
        <taxon>Pseudomonadati</taxon>
        <taxon>Pseudomonadota</taxon>
        <taxon>Betaproteobacteria</taxon>
        <taxon>Nitrosomonadales</taxon>
        <taxon>Methylophilaceae</taxon>
        <taxon>Methylobacillus</taxon>
    </lineage>
</organism>
<proteinExistence type="inferred from homology"/>
<protein>
    <recommendedName>
        <fullName evidence="1">Bifunctional protein FolD</fullName>
    </recommendedName>
    <domain>
        <recommendedName>
            <fullName evidence="1">Methylenetetrahydrofolate dehydrogenase</fullName>
            <ecNumber evidence="1">1.5.1.5</ecNumber>
        </recommendedName>
    </domain>
    <domain>
        <recommendedName>
            <fullName evidence="1">Methenyltetrahydrofolate cyclohydrolase</fullName>
            <ecNumber evidence="1">3.5.4.9</ecNumber>
        </recommendedName>
    </domain>
</protein>
<sequence length="289" mass="30685">MTAQIINGKAIAEATLSETKSLIDKRLEKGLRAPTLAVILLGSDPASTIYVRNKRLACDKTGIRSLAYDLPDTTSEAELLALIKQLNQDDAVDGILVQSPLPAHIEEKKIIETISATKDVDGFHPYNIGRLAVRQPTLRSCTPYGVIKLLQSTGVRLLGLDAVVVGVSNHVGRPMALELLLAGCTVTSCHRHTKDLQASIARADIVVAAVGKPHLIKGEWIKPGAIVIDIGINRLADGSLCGDVEFDIAKTRAAWITPVPGGVGPMTVATLMQNTLTALELGESDQAPA</sequence>
<gene>
    <name evidence="1" type="primary">folD</name>
    <name type="ordered locus">Mfla_0073</name>
</gene>